<dbReference type="EC" id="2.5.1.18"/>
<dbReference type="EMBL" id="M77682">
    <property type="protein sequence ID" value="AAA29141.1"/>
    <property type="molecule type" value="mRNA"/>
</dbReference>
<dbReference type="PIR" id="A48388">
    <property type="entry name" value="A48388"/>
</dbReference>
<dbReference type="PDB" id="2WRT">
    <property type="method" value="X-ray"/>
    <property type="resolution" value="2.40 A"/>
    <property type="chains" value="A/B/C/D/E/F/G/H/I/J/K/L=1-218"/>
</dbReference>
<dbReference type="PDBsum" id="2WRT"/>
<dbReference type="SMR" id="P30112"/>
<dbReference type="EvolutionaryTrace" id="P30112"/>
<dbReference type="GO" id="GO:0005737">
    <property type="term" value="C:cytoplasm"/>
    <property type="evidence" value="ECO:0007669"/>
    <property type="project" value="UniProtKB-SubCell"/>
</dbReference>
<dbReference type="GO" id="GO:0004364">
    <property type="term" value="F:glutathione transferase activity"/>
    <property type="evidence" value="ECO:0007669"/>
    <property type="project" value="UniProtKB-EC"/>
</dbReference>
<dbReference type="GO" id="GO:0006749">
    <property type="term" value="P:glutathione metabolic process"/>
    <property type="evidence" value="ECO:0007669"/>
    <property type="project" value="TreeGrafter"/>
</dbReference>
<dbReference type="CDD" id="cd03209">
    <property type="entry name" value="GST_C_Mu"/>
    <property type="match status" value="1"/>
</dbReference>
<dbReference type="FunFam" id="1.20.1050.10:FF:000003">
    <property type="entry name" value="Glutathione S-transferase 2"/>
    <property type="match status" value="1"/>
</dbReference>
<dbReference type="Gene3D" id="1.20.1050.130">
    <property type="match status" value="1"/>
</dbReference>
<dbReference type="InterPro" id="IPR010987">
    <property type="entry name" value="Glutathione-S-Trfase_C-like"/>
</dbReference>
<dbReference type="InterPro" id="IPR036282">
    <property type="entry name" value="Glutathione-S-Trfase_C_sf"/>
</dbReference>
<dbReference type="InterPro" id="IPR040079">
    <property type="entry name" value="Glutathione_S-Trfase"/>
</dbReference>
<dbReference type="InterPro" id="IPR004045">
    <property type="entry name" value="Glutathione_S-Trfase_N"/>
</dbReference>
<dbReference type="InterPro" id="IPR004046">
    <property type="entry name" value="GST_C"/>
</dbReference>
<dbReference type="InterPro" id="IPR050213">
    <property type="entry name" value="GST_superfamily"/>
</dbReference>
<dbReference type="InterPro" id="IPR036249">
    <property type="entry name" value="Thioredoxin-like_sf"/>
</dbReference>
<dbReference type="PANTHER" id="PTHR11571">
    <property type="entry name" value="GLUTATHIONE S-TRANSFERASE"/>
    <property type="match status" value="1"/>
</dbReference>
<dbReference type="PANTHER" id="PTHR11571:SF222">
    <property type="entry name" value="GLUTATHIONE TRANSFERASE"/>
    <property type="match status" value="1"/>
</dbReference>
<dbReference type="Pfam" id="PF14497">
    <property type="entry name" value="GST_C_3"/>
    <property type="match status" value="1"/>
</dbReference>
<dbReference type="Pfam" id="PF02798">
    <property type="entry name" value="GST_N"/>
    <property type="match status" value="1"/>
</dbReference>
<dbReference type="SFLD" id="SFLDG01205">
    <property type="entry name" value="AMPS.1"/>
    <property type="match status" value="1"/>
</dbReference>
<dbReference type="SFLD" id="SFLDS00019">
    <property type="entry name" value="Glutathione_Transferase_(cytos"/>
    <property type="match status" value="1"/>
</dbReference>
<dbReference type="SUPFAM" id="SSF47616">
    <property type="entry name" value="GST C-terminal domain-like"/>
    <property type="match status" value="1"/>
</dbReference>
<dbReference type="SUPFAM" id="SSF52833">
    <property type="entry name" value="Thioredoxin-like"/>
    <property type="match status" value="1"/>
</dbReference>
<dbReference type="PROSITE" id="PS50405">
    <property type="entry name" value="GST_CTER"/>
    <property type="match status" value="1"/>
</dbReference>
<dbReference type="PROSITE" id="PS50404">
    <property type="entry name" value="GST_NTER"/>
    <property type="match status" value="1"/>
</dbReference>
<name>GST26_FASHE</name>
<proteinExistence type="evidence at protein level"/>
<sequence>MPAKLGYWKIRGLQQPVRLLLEYLGEEYEEHLYGRDDREKWFGDKFNMGLDLPNLPYYIDDKCKLTQSVAIMRYIADKHGMLGTTPEERARISMIEGAAMDLRMGFVRVCYNPKFEEVKGDYLKELPTTLKMWSNFLGDRHYLTGSPVSHVDFMVYEALDCIRYLAPQCLEDFPKLKEFKSRIEDLPKIKAYMESEKFIKWPLNSWIASFGGGDAAPA</sequence>
<feature type="initiator methionine" description="Removed" evidence="1">
    <location>
        <position position="1"/>
    </location>
</feature>
<feature type="chain" id="PRO_0000185807" description="Glutathione S-transferase class-mu 26 kDa isozyme 51">
    <location>
        <begin position="2"/>
        <end position="218"/>
    </location>
</feature>
<feature type="domain" description="GST N-terminal">
    <location>
        <begin position="2"/>
        <end position="83"/>
    </location>
</feature>
<feature type="domain" description="GST C-terminal">
    <location>
        <begin position="85"/>
        <end position="203"/>
    </location>
</feature>
<feature type="binding site" evidence="2">
    <location>
        <begin position="7"/>
        <end position="8"/>
    </location>
    <ligand>
        <name>glutathione</name>
        <dbReference type="ChEBI" id="CHEBI:57925"/>
    </ligand>
</feature>
<feature type="binding site" evidence="2">
    <location>
        <begin position="41"/>
        <end position="45"/>
    </location>
    <ligand>
        <name>glutathione</name>
        <dbReference type="ChEBI" id="CHEBI:57925"/>
    </ligand>
</feature>
<feature type="binding site" evidence="2">
    <location>
        <begin position="54"/>
        <end position="55"/>
    </location>
    <ligand>
        <name>glutathione</name>
        <dbReference type="ChEBI" id="CHEBI:57925"/>
    </ligand>
</feature>
<feature type="binding site" evidence="2">
    <location>
        <begin position="67"/>
        <end position="68"/>
    </location>
    <ligand>
        <name>glutathione</name>
        <dbReference type="ChEBI" id="CHEBI:57925"/>
    </ligand>
</feature>
<feature type="binding site" evidence="1">
    <location>
        <position position="111"/>
    </location>
    <ligand>
        <name>substrate</name>
    </ligand>
</feature>
<feature type="sequence conflict" description="In Ref. 3." evidence="3" ref="3">
    <original>T</original>
    <variation>S</variation>
    <location>
        <position position="84"/>
    </location>
</feature>
<feature type="sequence conflict" description="In Ref. 3." evidence="3" ref="3">
    <original>N</original>
    <variation>D</variation>
    <location>
        <position position="135"/>
    </location>
</feature>
<feature type="sequence conflict" description="In Ref. 3." evidence="3" ref="3">
    <original>P</original>
    <variation>T</variation>
    <location>
        <position position="147"/>
    </location>
</feature>
<feature type="strand" evidence="4">
    <location>
        <begin position="3"/>
        <end position="11"/>
    </location>
</feature>
<feature type="turn" evidence="4">
    <location>
        <begin position="12"/>
        <end position="14"/>
    </location>
</feature>
<feature type="helix" evidence="4">
    <location>
        <begin position="15"/>
        <end position="24"/>
    </location>
</feature>
<feature type="strand" evidence="4">
    <location>
        <begin position="29"/>
        <end position="33"/>
    </location>
</feature>
<feature type="helix" evidence="4">
    <location>
        <begin position="38"/>
        <end position="44"/>
    </location>
</feature>
<feature type="strand" evidence="4">
    <location>
        <begin position="55"/>
        <end position="60"/>
    </location>
</feature>
<feature type="strand" evidence="4">
    <location>
        <begin position="63"/>
        <end position="67"/>
    </location>
</feature>
<feature type="helix" evidence="4">
    <location>
        <begin position="68"/>
        <end position="78"/>
    </location>
</feature>
<feature type="helix" evidence="4">
    <location>
        <begin position="86"/>
        <end position="110"/>
    </location>
</feature>
<feature type="helix" evidence="4">
    <location>
        <begin position="115"/>
        <end position="137"/>
    </location>
</feature>
<feature type="strand" evidence="4">
    <location>
        <begin position="145"/>
        <end position="147"/>
    </location>
</feature>
<feature type="helix" evidence="4">
    <location>
        <begin position="150"/>
        <end position="162"/>
    </location>
</feature>
<feature type="turn" evidence="4">
    <location>
        <begin position="163"/>
        <end position="165"/>
    </location>
</feature>
<feature type="turn" evidence="4">
    <location>
        <begin position="167"/>
        <end position="172"/>
    </location>
</feature>
<feature type="helix" evidence="4">
    <location>
        <begin position="174"/>
        <end position="184"/>
    </location>
</feature>
<feature type="helix" evidence="4">
    <location>
        <begin position="187"/>
        <end position="194"/>
    </location>
</feature>
<feature type="strand" evidence="4">
    <location>
        <begin position="208"/>
        <end position="211"/>
    </location>
</feature>
<comment type="function">
    <text>Conjugation of reduced glutathione to a wide number of exogenous and endogenous hydrophobic electrophiles.</text>
</comment>
<comment type="function">
    <text>GST isoenzymes appear to play a central role in the parasite detoxification system. Other functions are also suspected including a role in increasing the solubility of haematin in the parasite gut.</text>
</comment>
<comment type="catalytic activity">
    <reaction>
        <text>RX + glutathione = an S-substituted glutathione + a halide anion + H(+)</text>
        <dbReference type="Rhea" id="RHEA:16437"/>
        <dbReference type="ChEBI" id="CHEBI:15378"/>
        <dbReference type="ChEBI" id="CHEBI:16042"/>
        <dbReference type="ChEBI" id="CHEBI:17792"/>
        <dbReference type="ChEBI" id="CHEBI:57925"/>
        <dbReference type="ChEBI" id="CHEBI:90779"/>
        <dbReference type="EC" id="2.5.1.18"/>
    </reaction>
</comment>
<comment type="subunit">
    <text>Homodimer.</text>
</comment>
<comment type="subcellular location">
    <subcellularLocation>
        <location>Cytoplasm</location>
    </subcellularLocation>
</comment>
<comment type="similarity">
    <text evidence="3">Belongs to the GST superfamily. Mu family.</text>
</comment>
<reference key="1">
    <citation type="journal article" date="1992" name="Exp. Parasitol.">
        <title>Molecular characterization of cDNA sequences encoding glutathione S-transferases of Fasciola hepatica.</title>
        <authorList>
            <person name="Panaccio M."/>
            <person name="Wilson L.R."/>
            <person name="Crameri S.L."/>
            <person name="Wijffels G.L."/>
            <person name="Spithill T.W."/>
        </authorList>
    </citation>
    <scope>NUCLEOTIDE SEQUENCE [MRNA]</scope>
</reference>
<reference key="2">
    <citation type="journal article" date="1993" name="Exp. Parasitol.">
        <authorList>
            <person name="Panaccio M."/>
            <person name="Wilson L.R."/>
            <person name="Crameri S.L."/>
            <person name="Wijffels G.L."/>
            <person name="Spithill T.W."/>
        </authorList>
    </citation>
    <scope>ERRATUM OF PUBMED:1740183</scope>
</reference>
<reference key="3">
    <citation type="journal article" date="1993" name="Am. J. Trop. Med. Hyg.">
        <title>Sequence analysis of a Fasciola hepatica glutathione S-transferase cDNA clone.</title>
        <authorList>
            <person name="Muro A."/>
            <person name="Rodriguez-Medina J.R."/>
            <person name="Hillyer G.V."/>
        </authorList>
    </citation>
    <scope>NUCLEOTIDE SEQUENCE [MRNA] OF 10-218</scope>
</reference>
<evidence type="ECO:0000250" key="1"/>
<evidence type="ECO:0000250" key="2">
    <source>
        <dbReference type="UniProtKB" id="P08515"/>
    </source>
</evidence>
<evidence type="ECO:0000305" key="3"/>
<evidence type="ECO:0007829" key="4">
    <source>
        <dbReference type="PDB" id="2WRT"/>
    </source>
</evidence>
<organism>
    <name type="scientific">Fasciola hepatica</name>
    <name type="common">Liver fluke</name>
    <dbReference type="NCBI Taxonomy" id="6192"/>
    <lineage>
        <taxon>Eukaryota</taxon>
        <taxon>Metazoa</taxon>
        <taxon>Spiralia</taxon>
        <taxon>Lophotrochozoa</taxon>
        <taxon>Platyhelminthes</taxon>
        <taxon>Trematoda</taxon>
        <taxon>Digenea</taxon>
        <taxon>Plagiorchiida</taxon>
        <taxon>Echinostomata</taxon>
        <taxon>Echinostomatoidea</taxon>
        <taxon>Fasciolidae</taxon>
        <taxon>Fasciola</taxon>
    </lineage>
</organism>
<accession>P30112</accession>
<protein>
    <recommendedName>
        <fullName>Glutathione S-transferase class-mu 26 kDa isozyme 51</fullName>
        <shortName>GST51</shortName>
        <ecNumber>2.5.1.18</ecNumber>
    </recommendedName>
    <alternativeName>
        <fullName>Fh51</fullName>
    </alternativeName>
</protein>
<keyword id="KW-0002">3D-structure</keyword>
<keyword id="KW-0963">Cytoplasm</keyword>
<keyword id="KW-0808">Transferase</keyword>